<protein>
    <recommendedName>
        <fullName evidence="1">Ribosome-binding factor A</fullName>
    </recommendedName>
</protein>
<keyword id="KW-0963">Cytoplasm</keyword>
<keyword id="KW-1185">Reference proteome</keyword>
<keyword id="KW-0690">Ribosome biogenesis</keyword>
<gene>
    <name evidence="1" type="primary">rbfA</name>
    <name type="ordered locus">BQ2027_MB2863C</name>
</gene>
<accession>P65965</accession>
<accession>A0A1R3Y2C6</accession>
<accession>P71614</accession>
<accession>X2BLP7</accession>
<comment type="function">
    <text evidence="1">One of several proteins that assist in the late maturation steps of the functional core of the 30S ribosomal subunit. Associates with free 30S ribosomal subunits (but not with 30S subunits that are part of 70S ribosomes or polysomes). Required for efficient processing of 16S rRNA. May interact with the 5'-terminal helix region of 16S rRNA.</text>
</comment>
<comment type="subunit">
    <text evidence="1">Monomer. Binds 30S ribosomal subunits, but not 50S ribosomal subunits or 70S ribosomes.</text>
</comment>
<comment type="subcellular location">
    <subcellularLocation>
        <location evidence="1">Cytoplasm</location>
    </subcellularLocation>
</comment>
<comment type="similarity">
    <text evidence="1">Belongs to the RbfA family.</text>
</comment>
<sequence>MADAARARRLAKRIAAIVASAIEYEIKDPGLAGVTITDAKVTADLHDATVYYTVMGRTLHDEPNCAGAAAALERAKGVLRTKVGAGTGVRFTPTLTFTLDTISDSVHRMDELLARARAADADLARVRVGAKPAGEADPYRDNGSVAQSPAPGGLGIRTSDGPEAVEAPLTCGGDTGDDDRPKE</sequence>
<evidence type="ECO:0000255" key="1">
    <source>
        <dbReference type="HAMAP-Rule" id="MF_00003"/>
    </source>
</evidence>
<evidence type="ECO:0000256" key="2">
    <source>
        <dbReference type="SAM" id="MobiDB-lite"/>
    </source>
</evidence>
<proteinExistence type="inferred from homology"/>
<dbReference type="EMBL" id="LT708304">
    <property type="protein sequence ID" value="SIU01483.1"/>
    <property type="molecule type" value="Genomic_DNA"/>
</dbReference>
<dbReference type="RefSeq" id="NP_856508.1">
    <property type="nucleotide sequence ID" value="NC_002945.3"/>
</dbReference>
<dbReference type="RefSeq" id="WP_003414508.1">
    <property type="nucleotide sequence ID" value="NC_002945.4"/>
</dbReference>
<dbReference type="SMR" id="P65965"/>
<dbReference type="KEGG" id="mbo:BQ2027_MB2863C"/>
<dbReference type="PATRIC" id="fig|233413.5.peg.3140"/>
<dbReference type="Proteomes" id="UP000001419">
    <property type="component" value="Chromosome"/>
</dbReference>
<dbReference type="GO" id="GO:0005829">
    <property type="term" value="C:cytosol"/>
    <property type="evidence" value="ECO:0007669"/>
    <property type="project" value="TreeGrafter"/>
</dbReference>
<dbReference type="GO" id="GO:0043024">
    <property type="term" value="F:ribosomal small subunit binding"/>
    <property type="evidence" value="ECO:0007669"/>
    <property type="project" value="TreeGrafter"/>
</dbReference>
<dbReference type="GO" id="GO:0030490">
    <property type="term" value="P:maturation of SSU-rRNA"/>
    <property type="evidence" value="ECO:0007669"/>
    <property type="project" value="UniProtKB-UniRule"/>
</dbReference>
<dbReference type="FunFam" id="3.30.300.20:FF:000018">
    <property type="entry name" value="Ribosome-binding factor A"/>
    <property type="match status" value="1"/>
</dbReference>
<dbReference type="Gene3D" id="3.30.300.20">
    <property type="match status" value="1"/>
</dbReference>
<dbReference type="HAMAP" id="MF_00003">
    <property type="entry name" value="RbfA"/>
    <property type="match status" value="1"/>
</dbReference>
<dbReference type="InterPro" id="IPR015946">
    <property type="entry name" value="KH_dom-like_a/b"/>
</dbReference>
<dbReference type="InterPro" id="IPR000238">
    <property type="entry name" value="RbfA"/>
</dbReference>
<dbReference type="InterPro" id="IPR023799">
    <property type="entry name" value="RbfA_dom_sf"/>
</dbReference>
<dbReference type="InterPro" id="IPR020053">
    <property type="entry name" value="Ribosome-bd_factorA_CS"/>
</dbReference>
<dbReference type="NCBIfam" id="TIGR00082">
    <property type="entry name" value="rbfA"/>
    <property type="match status" value="1"/>
</dbReference>
<dbReference type="PANTHER" id="PTHR33515">
    <property type="entry name" value="RIBOSOME-BINDING FACTOR A, CHLOROPLASTIC-RELATED"/>
    <property type="match status" value="1"/>
</dbReference>
<dbReference type="PANTHER" id="PTHR33515:SF1">
    <property type="entry name" value="RIBOSOME-BINDING FACTOR A, CHLOROPLASTIC-RELATED"/>
    <property type="match status" value="1"/>
</dbReference>
<dbReference type="Pfam" id="PF02033">
    <property type="entry name" value="RBFA"/>
    <property type="match status" value="1"/>
</dbReference>
<dbReference type="SUPFAM" id="SSF89919">
    <property type="entry name" value="Ribosome-binding factor A, RbfA"/>
    <property type="match status" value="1"/>
</dbReference>
<dbReference type="PROSITE" id="PS01319">
    <property type="entry name" value="RBFA"/>
    <property type="match status" value="1"/>
</dbReference>
<reference key="1">
    <citation type="journal article" date="2003" name="Proc. Natl. Acad. Sci. U.S.A.">
        <title>The complete genome sequence of Mycobacterium bovis.</title>
        <authorList>
            <person name="Garnier T."/>
            <person name="Eiglmeier K."/>
            <person name="Camus J.-C."/>
            <person name="Medina N."/>
            <person name="Mansoor H."/>
            <person name="Pryor M."/>
            <person name="Duthoy S."/>
            <person name="Grondin S."/>
            <person name="Lacroix C."/>
            <person name="Monsempe C."/>
            <person name="Simon S."/>
            <person name="Harris B."/>
            <person name="Atkin R."/>
            <person name="Doggett J."/>
            <person name="Mayes R."/>
            <person name="Keating L."/>
            <person name="Wheeler P.R."/>
            <person name="Parkhill J."/>
            <person name="Barrell B.G."/>
            <person name="Cole S.T."/>
            <person name="Gordon S.V."/>
            <person name="Hewinson R.G."/>
        </authorList>
    </citation>
    <scope>NUCLEOTIDE SEQUENCE [LARGE SCALE GENOMIC DNA]</scope>
    <source>
        <strain>ATCC BAA-935 / AF2122/97</strain>
    </source>
</reference>
<reference key="2">
    <citation type="journal article" date="2017" name="Genome Announc.">
        <title>Updated reference genome sequence and annotation of Mycobacterium bovis AF2122/97.</title>
        <authorList>
            <person name="Malone K.M."/>
            <person name="Farrell D."/>
            <person name="Stuber T.P."/>
            <person name="Schubert O.T."/>
            <person name="Aebersold R."/>
            <person name="Robbe-Austerman S."/>
            <person name="Gordon S.V."/>
        </authorList>
    </citation>
    <scope>NUCLEOTIDE SEQUENCE [LARGE SCALE GENOMIC DNA]</scope>
    <scope>GENOME REANNOTATION</scope>
    <source>
        <strain>ATCC BAA-935 / AF2122/97</strain>
    </source>
</reference>
<organism>
    <name type="scientific">Mycobacterium bovis (strain ATCC BAA-935 / AF2122/97)</name>
    <dbReference type="NCBI Taxonomy" id="233413"/>
    <lineage>
        <taxon>Bacteria</taxon>
        <taxon>Bacillati</taxon>
        <taxon>Actinomycetota</taxon>
        <taxon>Actinomycetes</taxon>
        <taxon>Mycobacteriales</taxon>
        <taxon>Mycobacteriaceae</taxon>
        <taxon>Mycobacterium</taxon>
        <taxon>Mycobacterium tuberculosis complex</taxon>
    </lineage>
</organism>
<name>RBFA_MYCBO</name>
<feature type="chain" id="PRO_0000102699" description="Ribosome-binding factor A">
    <location>
        <begin position="1"/>
        <end position="183"/>
    </location>
</feature>
<feature type="region of interest" description="Disordered" evidence="2">
    <location>
        <begin position="132"/>
        <end position="183"/>
    </location>
</feature>